<comment type="function">
    <text evidence="1">Bidirectionally degrades single-stranded DNA into large acid-insoluble oligonucleotides, which are then degraded further into small acid-soluble oligonucleotides.</text>
</comment>
<comment type="catalytic activity">
    <reaction evidence="1">
        <text>Exonucleolytic cleavage in either 5'- to 3'- or 3'- to 5'-direction to yield nucleoside 5'-phosphates.</text>
        <dbReference type="EC" id="3.1.11.6"/>
    </reaction>
</comment>
<comment type="subunit">
    <text evidence="1">Heterooligomer composed of large and small subunits.</text>
</comment>
<comment type="subcellular location">
    <subcellularLocation>
        <location evidence="1">Cytoplasm</location>
    </subcellularLocation>
</comment>
<comment type="similarity">
    <text evidence="1">Belongs to the XseB family.</text>
</comment>
<sequence>MAVKKPENLTFEAAIEELDSVVNQLESGDLPLEDALKKFERGISLARAGQEKLTQAEQRVDILLQADDNAELTPFDANDD</sequence>
<protein>
    <recommendedName>
        <fullName evidence="1">Exodeoxyribonuclease 7 small subunit</fullName>
        <ecNumber evidence="1">3.1.11.6</ecNumber>
    </recommendedName>
    <alternativeName>
        <fullName evidence="1">Exodeoxyribonuclease VII small subunit</fullName>
        <shortName evidence="1">Exonuclease VII small subunit</shortName>
    </alternativeName>
</protein>
<evidence type="ECO:0000255" key="1">
    <source>
        <dbReference type="HAMAP-Rule" id="MF_00337"/>
    </source>
</evidence>
<name>EX7S_ALISL</name>
<keyword id="KW-0963">Cytoplasm</keyword>
<keyword id="KW-0269">Exonuclease</keyword>
<keyword id="KW-0378">Hydrolase</keyword>
<keyword id="KW-0540">Nuclease</keyword>
<organism>
    <name type="scientific">Aliivibrio salmonicida (strain LFI1238)</name>
    <name type="common">Vibrio salmonicida (strain LFI1238)</name>
    <dbReference type="NCBI Taxonomy" id="316275"/>
    <lineage>
        <taxon>Bacteria</taxon>
        <taxon>Pseudomonadati</taxon>
        <taxon>Pseudomonadota</taxon>
        <taxon>Gammaproteobacteria</taxon>
        <taxon>Vibrionales</taxon>
        <taxon>Vibrionaceae</taxon>
        <taxon>Aliivibrio</taxon>
    </lineage>
</organism>
<feature type="chain" id="PRO_1000119894" description="Exodeoxyribonuclease 7 small subunit">
    <location>
        <begin position="1"/>
        <end position="80"/>
    </location>
</feature>
<dbReference type="EC" id="3.1.11.6" evidence="1"/>
<dbReference type="EMBL" id="FM178379">
    <property type="protein sequence ID" value="CAQ78620.1"/>
    <property type="molecule type" value="Genomic_DNA"/>
</dbReference>
<dbReference type="RefSeq" id="WP_012549706.1">
    <property type="nucleotide sequence ID" value="NC_011312.1"/>
</dbReference>
<dbReference type="SMR" id="B6EIA9"/>
<dbReference type="KEGG" id="vsa:VSAL_I0935"/>
<dbReference type="eggNOG" id="COG1722">
    <property type="taxonomic scope" value="Bacteria"/>
</dbReference>
<dbReference type="HOGENOM" id="CLU_145918_3_3_6"/>
<dbReference type="Proteomes" id="UP000001730">
    <property type="component" value="Chromosome 1"/>
</dbReference>
<dbReference type="GO" id="GO:0005829">
    <property type="term" value="C:cytosol"/>
    <property type="evidence" value="ECO:0007669"/>
    <property type="project" value="TreeGrafter"/>
</dbReference>
<dbReference type="GO" id="GO:0009318">
    <property type="term" value="C:exodeoxyribonuclease VII complex"/>
    <property type="evidence" value="ECO:0007669"/>
    <property type="project" value="InterPro"/>
</dbReference>
<dbReference type="GO" id="GO:0008855">
    <property type="term" value="F:exodeoxyribonuclease VII activity"/>
    <property type="evidence" value="ECO:0007669"/>
    <property type="project" value="UniProtKB-UniRule"/>
</dbReference>
<dbReference type="GO" id="GO:0006308">
    <property type="term" value="P:DNA catabolic process"/>
    <property type="evidence" value="ECO:0007669"/>
    <property type="project" value="UniProtKB-UniRule"/>
</dbReference>
<dbReference type="Gene3D" id="1.10.287.1040">
    <property type="entry name" value="Exonuclease VII, small subunit"/>
    <property type="match status" value="1"/>
</dbReference>
<dbReference type="HAMAP" id="MF_00337">
    <property type="entry name" value="Exonuc_7_S"/>
    <property type="match status" value="1"/>
</dbReference>
<dbReference type="InterPro" id="IPR003761">
    <property type="entry name" value="Exonuc_VII_S"/>
</dbReference>
<dbReference type="InterPro" id="IPR037004">
    <property type="entry name" value="Exonuc_VII_ssu_sf"/>
</dbReference>
<dbReference type="NCBIfam" id="NF002137">
    <property type="entry name" value="PRK00977.1-1"/>
    <property type="match status" value="1"/>
</dbReference>
<dbReference type="NCBIfam" id="NF002140">
    <property type="entry name" value="PRK00977.1-4"/>
    <property type="match status" value="1"/>
</dbReference>
<dbReference type="NCBIfam" id="TIGR01280">
    <property type="entry name" value="xseB"/>
    <property type="match status" value="1"/>
</dbReference>
<dbReference type="PANTHER" id="PTHR34137">
    <property type="entry name" value="EXODEOXYRIBONUCLEASE 7 SMALL SUBUNIT"/>
    <property type="match status" value="1"/>
</dbReference>
<dbReference type="PANTHER" id="PTHR34137:SF1">
    <property type="entry name" value="EXODEOXYRIBONUCLEASE 7 SMALL SUBUNIT"/>
    <property type="match status" value="1"/>
</dbReference>
<dbReference type="Pfam" id="PF02609">
    <property type="entry name" value="Exonuc_VII_S"/>
    <property type="match status" value="1"/>
</dbReference>
<dbReference type="PIRSF" id="PIRSF006488">
    <property type="entry name" value="Exonuc_VII_S"/>
    <property type="match status" value="1"/>
</dbReference>
<dbReference type="SUPFAM" id="SSF116842">
    <property type="entry name" value="XseB-like"/>
    <property type="match status" value="1"/>
</dbReference>
<gene>
    <name evidence="1" type="primary">xseB</name>
    <name type="ordered locus">VSAL_I0935</name>
</gene>
<proteinExistence type="inferred from homology"/>
<accession>B6EIA9</accession>
<reference key="1">
    <citation type="journal article" date="2008" name="BMC Genomics">
        <title>The genome sequence of the fish pathogen Aliivibrio salmonicida strain LFI1238 shows extensive evidence of gene decay.</title>
        <authorList>
            <person name="Hjerde E."/>
            <person name="Lorentzen M.S."/>
            <person name="Holden M.T."/>
            <person name="Seeger K."/>
            <person name="Paulsen S."/>
            <person name="Bason N."/>
            <person name="Churcher C."/>
            <person name="Harris D."/>
            <person name="Norbertczak H."/>
            <person name="Quail M.A."/>
            <person name="Sanders S."/>
            <person name="Thurston S."/>
            <person name="Parkhill J."/>
            <person name="Willassen N.P."/>
            <person name="Thomson N.R."/>
        </authorList>
    </citation>
    <scope>NUCLEOTIDE SEQUENCE [LARGE SCALE GENOMIC DNA]</scope>
    <source>
        <strain>LFI1238</strain>
    </source>
</reference>